<accession>B4TEB2</accession>
<organism>
    <name type="scientific">Salmonella heidelberg (strain SL476)</name>
    <dbReference type="NCBI Taxonomy" id="454169"/>
    <lineage>
        <taxon>Bacteria</taxon>
        <taxon>Pseudomonadati</taxon>
        <taxon>Pseudomonadota</taxon>
        <taxon>Gammaproteobacteria</taxon>
        <taxon>Enterobacterales</taxon>
        <taxon>Enterobacteriaceae</taxon>
        <taxon>Salmonella</taxon>
    </lineage>
</organism>
<dbReference type="EMBL" id="CP001120">
    <property type="protein sequence ID" value="ACF68752.1"/>
    <property type="molecule type" value="Genomic_DNA"/>
</dbReference>
<dbReference type="RefSeq" id="WP_000832536.1">
    <property type="nucleotide sequence ID" value="NC_011083.1"/>
</dbReference>
<dbReference type="SMR" id="B4TEB2"/>
<dbReference type="KEGG" id="seh:SeHA_C4617"/>
<dbReference type="HOGENOM" id="CLU_018808_8_3_6"/>
<dbReference type="Proteomes" id="UP000001866">
    <property type="component" value="Chromosome"/>
</dbReference>
<dbReference type="GO" id="GO:0005886">
    <property type="term" value="C:plasma membrane"/>
    <property type="evidence" value="ECO:0007669"/>
    <property type="project" value="UniProtKB-SubCell"/>
</dbReference>
<dbReference type="GO" id="GO:0015123">
    <property type="term" value="F:acetate transmembrane transporter activity"/>
    <property type="evidence" value="ECO:0007669"/>
    <property type="project" value="UniProtKB-UniRule"/>
</dbReference>
<dbReference type="GO" id="GO:0043879">
    <property type="term" value="F:glycolate transmembrane transporter activity"/>
    <property type="evidence" value="ECO:0007669"/>
    <property type="project" value="InterPro"/>
</dbReference>
<dbReference type="GO" id="GO:0015293">
    <property type="term" value="F:symporter activity"/>
    <property type="evidence" value="ECO:0007669"/>
    <property type="project" value="UniProtKB-KW"/>
</dbReference>
<dbReference type="GO" id="GO:0006847">
    <property type="term" value="P:plasma membrane acetate transport"/>
    <property type="evidence" value="ECO:0007669"/>
    <property type="project" value="TreeGrafter"/>
</dbReference>
<dbReference type="GO" id="GO:0006814">
    <property type="term" value="P:sodium ion transport"/>
    <property type="evidence" value="ECO:0007669"/>
    <property type="project" value="UniProtKB-KW"/>
</dbReference>
<dbReference type="CDD" id="cd11480">
    <property type="entry name" value="SLC5sbd_u4"/>
    <property type="match status" value="1"/>
</dbReference>
<dbReference type="FunFam" id="1.20.1730.10:FF:000001">
    <property type="entry name" value="Cation/acetate symporter ActP"/>
    <property type="match status" value="1"/>
</dbReference>
<dbReference type="Gene3D" id="1.20.1730.10">
    <property type="entry name" value="Sodium/glucose cotransporter"/>
    <property type="match status" value="1"/>
</dbReference>
<dbReference type="HAMAP" id="MF_01426">
    <property type="entry name" value="Acet_symport_ActP"/>
    <property type="match status" value="1"/>
</dbReference>
<dbReference type="InterPro" id="IPR014083">
    <property type="entry name" value="Cation/Ac_symporter_ActP"/>
</dbReference>
<dbReference type="InterPro" id="IPR038377">
    <property type="entry name" value="Na/Glc_symporter_sf"/>
</dbReference>
<dbReference type="InterPro" id="IPR001734">
    <property type="entry name" value="Na/solute_symporter"/>
</dbReference>
<dbReference type="InterPro" id="IPR018212">
    <property type="entry name" value="Na/solute_symporter_CS"/>
</dbReference>
<dbReference type="InterPro" id="IPR050277">
    <property type="entry name" value="Sodium:Solute_Symporter"/>
</dbReference>
<dbReference type="NCBIfam" id="NF006903">
    <property type="entry name" value="PRK09395.1"/>
    <property type="match status" value="1"/>
</dbReference>
<dbReference type="NCBIfam" id="NF009135">
    <property type="entry name" value="PRK12488.1"/>
    <property type="match status" value="1"/>
</dbReference>
<dbReference type="NCBIfam" id="TIGR00813">
    <property type="entry name" value="sss"/>
    <property type="match status" value="1"/>
</dbReference>
<dbReference type="NCBIfam" id="TIGR02711">
    <property type="entry name" value="symport_actP"/>
    <property type="match status" value="1"/>
</dbReference>
<dbReference type="PANTHER" id="PTHR48086:SF6">
    <property type="entry name" value="CATION_ACETATE SYMPORTER ACTP"/>
    <property type="match status" value="1"/>
</dbReference>
<dbReference type="PANTHER" id="PTHR48086">
    <property type="entry name" value="SODIUM/PROLINE SYMPORTER-RELATED"/>
    <property type="match status" value="1"/>
</dbReference>
<dbReference type="Pfam" id="PF00474">
    <property type="entry name" value="SSF"/>
    <property type="match status" value="1"/>
</dbReference>
<dbReference type="PROSITE" id="PS00456">
    <property type="entry name" value="NA_SOLUT_SYMP_1"/>
    <property type="match status" value="1"/>
</dbReference>
<dbReference type="PROSITE" id="PS00457">
    <property type="entry name" value="NA_SOLUT_SYMP_2"/>
    <property type="match status" value="1"/>
</dbReference>
<dbReference type="PROSITE" id="PS50283">
    <property type="entry name" value="NA_SOLUT_SYMP_3"/>
    <property type="match status" value="1"/>
</dbReference>
<proteinExistence type="inferred from homology"/>
<protein>
    <recommendedName>
        <fullName evidence="1">Cation/acetate symporter ActP</fullName>
    </recommendedName>
    <alternativeName>
        <fullName evidence="1">Acetate permease</fullName>
    </alternativeName>
    <alternativeName>
        <fullName evidence="1">Acetate transporter ActP</fullName>
    </alternativeName>
</protein>
<comment type="function">
    <text evidence="1">Transports acetate.</text>
</comment>
<comment type="subcellular location">
    <subcellularLocation>
        <location evidence="1">Cell inner membrane</location>
        <topology evidence="1">Multi-pass membrane protein</topology>
    </subcellularLocation>
</comment>
<comment type="similarity">
    <text evidence="1">Belongs to the sodium:solute symporter (SSF) (TC 2.A.21) family.</text>
</comment>
<reference key="1">
    <citation type="journal article" date="2011" name="J. Bacteriol.">
        <title>Comparative genomics of 28 Salmonella enterica isolates: evidence for CRISPR-mediated adaptive sublineage evolution.</title>
        <authorList>
            <person name="Fricke W.F."/>
            <person name="Mammel M.K."/>
            <person name="McDermott P.F."/>
            <person name="Tartera C."/>
            <person name="White D.G."/>
            <person name="Leclerc J.E."/>
            <person name="Ravel J."/>
            <person name="Cebula T.A."/>
        </authorList>
    </citation>
    <scope>NUCLEOTIDE SEQUENCE [LARGE SCALE GENOMIC DNA]</scope>
    <source>
        <strain>SL476</strain>
    </source>
</reference>
<sequence length="549" mass="59008">MKRVLTALAAALPFAAHAADAISGAVERQPTNWQAIIMFLIFVVFTLGITYWASKRVRSRSDYYTAGGNITGFQNGLAIAGDYMSAASFLGISALVFTSGYDGLIYSLGFLVGWPIILFLIAERLRNLGRYTFADVASYRLKQGPIRILSACGSLVVVALYLIAQMVGAGKLIELLFGLNYHIAVVLVGVLMMMYVLFGGMLATTWVQIIKAVLLLFGASFMAFMVMKHVGFSFNNLFTEAMAVHPKGTAIMSPGGLVQDPISALSLGLGLMFGTAGLPHILMRFFTVSDAREARKSVFYATGFMGYFYILTFIIGFGAIMLVGANPAYKDAAGALIGGNNMAAVHLANAVGGNLFLGFISAVAFATILAVVAGLTLAGASAVSHDLYANVFRKGATEREELKVSKITVLVLGVIAIILGVLFENQNIAFMVGLAFAIAASCNFPIILLSMYWSKLTTRGAMLGGWLGLLTAVVLMILGPTIWVQILGHEKAIFPYEYPALFSISVAFLGIWFFSATDNSAEGNREREQFRAQFIRSQTGFGVQQGRAH</sequence>
<evidence type="ECO:0000255" key="1">
    <source>
        <dbReference type="HAMAP-Rule" id="MF_01426"/>
    </source>
</evidence>
<keyword id="KW-0997">Cell inner membrane</keyword>
<keyword id="KW-1003">Cell membrane</keyword>
<keyword id="KW-0406">Ion transport</keyword>
<keyword id="KW-0472">Membrane</keyword>
<keyword id="KW-0915">Sodium</keyword>
<keyword id="KW-0739">Sodium transport</keyword>
<keyword id="KW-0769">Symport</keyword>
<keyword id="KW-0812">Transmembrane</keyword>
<keyword id="KW-1133">Transmembrane helix</keyword>
<keyword id="KW-0813">Transport</keyword>
<name>ACTP_SALHS</name>
<feature type="chain" id="PRO_1000145726" description="Cation/acetate symporter ActP">
    <location>
        <begin position="1"/>
        <end position="549"/>
    </location>
</feature>
<feature type="transmembrane region" description="Helical" evidence="1">
    <location>
        <begin position="33"/>
        <end position="53"/>
    </location>
</feature>
<feature type="transmembrane region" description="Helical" evidence="1">
    <location>
        <begin position="77"/>
        <end position="97"/>
    </location>
</feature>
<feature type="transmembrane region" description="Helical" evidence="1">
    <location>
        <begin position="103"/>
        <end position="123"/>
    </location>
</feature>
<feature type="transmembrane region" description="Helical" evidence="1">
    <location>
        <begin position="148"/>
        <end position="168"/>
    </location>
</feature>
<feature type="transmembrane region" description="Helical" evidence="1">
    <location>
        <begin position="183"/>
        <end position="203"/>
    </location>
</feature>
<feature type="transmembrane region" description="Helical" evidence="1">
    <location>
        <begin position="206"/>
        <end position="226"/>
    </location>
</feature>
<feature type="transmembrane region" description="Helical" evidence="1">
    <location>
        <begin position="262"/>
        <end position="282"/>
    </location>
</feature>
<feature type="transmembrane region" description="Helical" evidence="1">
    <location>
        <begin position="303"/>
        <end position="323"/>
    </location>
</feature>
<feature type="transmembrane region" description="Helical" evidence="1">
    <location>
        <begin position="355"/>
        <end position="375"/>
    </location>
</feature>
<feature type="transmembrane region" description="Helical" evidence="1">
    <location>
        <begin position="404"/>
        <end position="424"/>
    </location>
</feature>
<feature type="transmembrane region" description="Helical" evidence="1">
    <location>
        <begin position="428"/>
        <end position="448"/>
    </location>
</feature>
<feature type="transmembrane region" description="Helical" evidence="1">
    <location>
        <begin position="464"/>
        <end position="484"/>
    </location>
</feature>
<feature type="transmembrane region" description="Helical" evidence="1">
    <location>
        <begin position="493"/>
        <end position="513"/>
    </location>
</feature>
<gene>
    <name evidence="1" type="primary">actP</name>
    <name type="ordered locus">SeHA_C4617</name>
</gene>